<comment type="function">
    <text evidence="1">Catalyzes the decarboxylative condensation of pimeloyl-[acyl-carrier protein] and L-alanine to produce 8-amino-7-oxononanoate (AON), [acyl-carrier protein], and carbon dioxide.</text>
</comment>
<comment type="catalytic activity">
    <reaction evidence="1">
        <text>6-carboxyhexanoyl-[ACP] + L-alanine + H(+) = (8S)-8-amino-7-oxononanoate + holo-[ACP] + CO2</text>
        <dbReference type="Rhea" id="RHEA:42288"/>
        <dbReference type="Rhea" id="RHEA-COMP:9685"/>
        <dbReference type="Rhea" id="RHEA-COMP:9955"/>
        <dbReference type="ChEBI" id="CHEBI:15378"/>
        <dbReference type="ChEBI" id="CHEBI:16526"/>
        <dbReference type="ChEBI" id="CHEBI:57972"/>
        <dbReference type="ChEBI" id="CHEBI:64479"/>
        <dbReference type="ChEBI" id="CHEBI:78846"/>
        <dbReference type="ChEBI" id="CHEBI:149468"/>
        <dbReference type="EC" id="2.3.1.47"/>
    </reaction>
</comment>
<comment type="cofactor">
    <cofactor evidence="1">
        <name>pyridoxal 5'-phosphate</name>
        <dbReference type="ChEBI" id="CHEBI:597326"/>
    </cofactor>
</comment>
<comment type="pathway">
    <text evidence="1">Cofactor biosynthesis; biotin biosynthesis.</text>
</comment>
<comment type="subunit">
    <text evidence="1">Homodimer.</text>
</comment>
<comment type="similarity">
    <text evidence="1">Belongs to the class-II pyridoxal-phosphate-dependent aminotransferase family. BioF subfamily.</text>
</comment>
<proteinExistence type="inferred from homology"/>
<keyword id="KW-0093">Biotin biosynthesis</keyword>
<keyword id="KW-0663">Pyridoxal phosphate</keyword>
<keyword id="KW-0808">Transferase</keyword>
<feature type="chain" id="PRO_0000381161" description="8-amino-7-oxononanoate synthase">
    <location>
        <begin position="1"/>
        <end position="383"/>
    </location>
</feature>
<feature type="binding site" evidence="1">
    <location>
        <position position="21"/>
    </location>
    <ligand>
        <name>substrate</name>
    </ligand>
</feature>
<feature type="binding site" evidence="1">
    <location>
        <begin position="108"/>
        <end position="109"/>
    </location>
    <ligand>
        <name>pyridoxal 5'-phosphate</name>
        <dbReference type="ChEBI" id="CHEBI:597326"/>
    </ligand>
</feature>
<feature type="binding site" evidence="1">
    <location>
        <position position="133"/>
    </location>
    <ligand>
        <name>substrate</name>
    </ligand>
</feature>
<feature type="binding site" evidence="1">
    <location>
        <position position="179"/>
    </location>
    <ligand>
        <name>pyridoxal 5'-phosphate</name>
        <dbReference type="ChEBI" id="CHEBI:597326"/>
    </ligand>
</feature>
<feature type="binding site" evidence="1">
    <location>
        <position position="207"/>
    </location>
    <ligand>
        <name>pyridoxal 5'-phosphate</name>
        <dbReference type="ChEBI" id="CHEBI:597326"/>
    </ligand>
</feature>
<feature type="binding site" evidence="1">
    <location>
        <position position="233"/>
    </location>
    <ligand>
        <name>pyridoxal 5'-phosphate</name>
        <dbReference type="ChEBI" id="CHEBI:597326"/>
    </ligand>
</feature>
<feature type="binding site" evidence="1">
    <location>
        <position position="350"/>
    </location>
    <ligand>
        <name>substrate</name>
    </ligand>
</feature>
<feature type="modified residue" description="N6-(pyridoxal phosphate)lysine" evidence="1">
    <location>
        <position position="236"/>
    </location>
</feature>
<reference key="1">
    <citation type="submission" date="2008-02" db="EMBL/GenBank/DDBJ databases">
        <title>Complete sequence of Yersinia pseudotuberculosis YPIII.</title>
        <authorList>
            <consortium name="US DOE Joint Genome Institute"/>
            <person name="Copeland A."/>
            <person name="Lucas S."/>
            <person name="Lapidus A."/>
            <person name="Glavina del Rio T."/>
            <person name="Dalin E."/>
            <person name="Tice H."/>
            <person name="Bruce D."/>
            <person name="Goodwin L."/>
            <person name="Pitluck S."/>
            <person name="Munk A.C."/>
            <person name="Brettin T."/>
            <person name="Detter J.C."/>
            <person name="Han C."/>
            <person name="Tapia R."/>
            <person name="Schmutz J."/>
            <person name="Larimer F."/>
            <person name="Land M."/>
            <person name="Hauser L."/>
            <person name="Challacombe J.F."/>
            <person name="Green L."/>
            <person name="Lindler L.E."/>
            <person name="Nikolich M.P."/>
            <person name="Richardson P."/>
        </authorList>
    </citation>
    <scope>NUCLEOTIDE SEQUENCE [LARGE SCALE GENOMIC DNA]</scope>
    <source>
        <strain>YPIII</strain>
    </source>
</reference>
<accession>B1JSS3</accession>
<dbReference type="EC" id="2.3.1.47" evidence="1"/>
<dbReference type="EMBL" id="CP000950">
    <property type="protein sequence ID" value="ACA69204.1"/>
    <property type="molecule type" value="Genomic_DNA"/>
</dbReference>
<dbReference type="RefSeq" id="WP_012105479.1">
    <property type="nucleotide sequence ID" value="NZ_CP009792.1"/>
</dbReference>
<dbReference type="SMR" id="B1JSS3"/>
<dbReference type="KEGG" id="ypy:YPK_2930"/>
<dbReference type="PATRIC" id="fig|502800.11.peg.3651"/>
<dbReference type="UniPathway" id="UPA00078"/>
<dbReference type="GO" id="GO:0008710">
    <property type="term" value="F:8-amino-7-oxononanoate synthase activity"/>
    <property type="evidence" value="ECO:0007669"/>
    <property type="project" value="UniProtKB-UniRule"/>
</dbReference>
<dbReference type="GO" id="GO:0030170">
    <property type="term" value="F:pyridoxal phosphate binding"/>
    <property type="evidence" value="ECO:0007669"/>
    <property type="project" value="UniProtKB-UniRule"/>
</dbReference>
<dbReference type="GO" id="GO:0009102">
    <property type="term" value="P:biotin biosynthetic process"/>
    <property type="evidence" value="ECO:0007669"/>
    <property type="project" value="UniProtKB-UniRule"/>
</dbReference>
<dbReference type="Gene3D" id="3.90.1150.10">
    <property type="entry name" value="Aspartate Aminotransferase, domain 1"/>
    <property type="match status" value="1"/>
</dbReference>
<dbReference type="Gene3D" id="3.40.640.10">
    <property type="entry name" value="Type I PLP-dependent aspartate aminotransferase-like (Major domain)"/>
    <property type="match status" value="1"/>
</dbReference>
<dbReference type="HAMAP" id="MF_01693">
    <property type="entry name" value="BioF_aminotrans_2"/>
    <property type="match status" value="1"/>
</dbReference>
<dbReference type="InterPro" id="IPR001917">
    <property type="entry name" value="Aminotrans_II_pyridoxalP_BS"/>
</dbReference>
<dbReference type="InterPro" id="IPR004839">
    <property type="entry name" value="Aminotransferase_I/II_large"/>
</dbReference>
<dbReference type="InterPro" id="IPR050087">
    <property type="entry name" value="AON_synthase_class-II"/>
</dbReference>
<dbReference type="InterPro" id="IPR004723">
    <property type="entry name" value="AONS_Archaea/Proteobacteria"/>
</dbReference>
<dbReference type="InterPro" id="IPR022834">
    <property type="entry name" value="AONS_Proteobacteria"/>
</dbReference>
<dbReference type="InterPro" id="IPR015424">
    <property type="entry name" value="PyrdxlP-dep_Trfase"/>
</dbReference>
<dbReference type="InterPro" id="IPR015421">
    <property type="entry name" value="PyrdxlP-dep_Trfase_major"/>
</dbReference>
<dbReference type="InterPro" id="IPR015422">
    <property type="entry name" value="PyrdxlP-dep_Trfase_small"/>
</dbReference>
<dbReference type="NCBIfam" id="TIGR00858">
    <property type="entry name" value="bioF"/>
    <property type="match status" value="1"/>
</dbReference>
<dbReference type="PANTHER" id="PTHR13693:SF100">
    <property type="entry name" value="8-AMINO-7-OXONONANOATE SYNTHASE"/>
    <property type="match status" value="1"/>
</dbReference>
<dbReference type="PANTHER" id="PTHR13693">
    <property type="entry name" value="CLASS II AMINOTRANSFERASE/8-AMINO-7-OXONONANOATE SYNTHASE"/>
    <property type="match status" value="1"/>
</dbReference>
<dbReference type="Pfam" id="PF00155">
    <property type="entry name" value="Aminotran_1_2"/>
    <property type="match status" value="1"/>
</dbReference>
<dbReference type="SUPFAM" id="SSF53383">
    <property type="entry name" value="PLP-dependent transferases"/>
    <property type="match status" value="1"/>
</dbReference>
<dbReference type="PROSITE" id="PS00599">
    <property type="entry name" value="AA_TRANSFER_CLASS_2"/>
    <property type="match status" value="1"/>
</dbReference>
<sequence>MSWQDKIAQGLQRRRDAAAYRTRQVNEGANGRWLQSGERQYLNFSSNDYLGLSQNDEVIAAWQQGARRYGVGSGGSGHVTGYSQPHARLEQRLADWLGYPRALLFISGYAANQAVLTALTDADDRILADKLSHASLLEAAAHSPAQLRRFQHNQPEALQNLLIKPCQGQTLVVTEGVFSMDGDSAPLAALQQQTSAAGGWLLVDDAHGIGVHGEEGRGSCWLQGVQPELLVVTFGKAFGLSGAAVLCQEPVAEYLLQYARHLIYSTAMPPAQACALQAALRQVQQGDALRQQLQQRIRQFRTAAAHLPLQLGASKTAIQPLLVGDNQQSLIWAEQLRAAGLWVTAIRPPTVPPGSARLRITLSAAHQPEDIDRLLEVLYGLCH</sequence>
<gene>
    <name evidence="1" type="primary">bioF</name>
    <name type="ordered locus">YPK_2930</name>
</gene>
<name>BIOF_YERPY</name>
<evidence type="ECO:0000255" key="1">
    <source>
        <dbReference type="HAMAP-Rule" id="MF_01693"/>
    </source>
</evidence>
<organism>
    <name type="scientific">Yersinia pseudotuberculosis serotype O:3 (strain YPIII)</name>
    <dbReference type="NCBI Taxonomy" id="502800"/>
    <lineage>
        <taxon>Bacteria</taxon>
        <taxon>Pseudomonadati</taxon>
        <taxon>Pseudomonadota</taxon>
        <taxon>Gammaproteobacteria</taxon>
        <taxon>Enterobacterales</taxon>
        <taxon>Yersiniaceae</taxon>
        <taxon>Yersinia</taxon>
    </lineage>
</organism>
<protein>
    <recommendedName>
        <fullName evidence="1">8-amino-7-oxononanoate synthase</fullName>
        <shortName evidence="1">AONS</shortName>
        <ecNumber evidence="1">2.3.1.47</ecNumber>
    </recommendedName>
    <alternativeName>
        <fullName evidence="1">7-keto-8-amino-pelargonic acid synthase</fullName>
        <shortName evidence="1">7-KAP synthase</shortName>
        <shortName evidence="1">KAPA synthase</shortName>
    </alternativeName>
    <alternativeName>
        <fullName evidence="1">8-amino-7-ketopelargonate synthase</fullName>
    </alternativeName>
</protein>